<name>LIS1_KOMPG</name>
<proteinExistence type="inferred from homology"/>
<sequence length="500" mass="56916">MSDILTKKQDIELRRAVIQYLRYFVPEFAQDTAVNTISRLLLDADLNKFDNEIQRMIPKQYLEKKWTAVLRLHRKVEELERTIGYQSNKVEIELQSQPHSDITSNSLDRINWVPGIEPFQKLNMHNGHPVTAIDIHPFQPIMATASQDGTIVIWNLLNLTEPQQIIRNAHTRSINTIKFMNQEVMDGHSTKKNRLLLATGSSDLLIKIWDIEDSANLKALRTLTGHENIISCLCFHPTEPSKLVSCSKDKTTKVWDTRTGSIVLSFVGHSNWVRSVDINRTGEFTLTSSNDHSIRLSSLLTGTGIGLMIGHEQVVEKVKFLPMACNKYLDHIAGVKFQNELKINDDNYNKVDYKYCISGGRDNSVCIWLLPLPLIRSDGTMHPSTNPEGKLILKLTEHKSWVKDIAIHPNSRFIISVGDDRKINIWDLGLLLESNLLQPFRSISTQGFPSTLCMAKPVIKDQESDDLILLNEAMRCYLAVGHSDGTVTLWKKNIQKEYIL</sequence>
<gene>
    <name evidence="1" type="primary">PAC1</name>
    <name evidence="1" type="synonym">LIS1</name>
    <name type="ordered locus">PAS_chr3_1092</name>
</gene>
<dbReference type="EMBL" id="FN392321">
    <property type="protein sequence ID" value="CAY71159.1"/>
    <property type="molecule type" value="Genomic_DNA"/>
</dbReference>
<dbReference type="RefSeq" id="XP_002493338.1">
    <property type="nucleotide sequence ID" value="XM_002493293.1"/>
</dbReference>
<dbReference type="SMR" id="C4R6H3"/>
<dbReference type="FunCoup" id="C4R6H3">
    <property type="interactions" value="60"/>
</dbReference>
<dbReference type="STRING" id="644223.C4R6H3"/>
<dbReference type="EnsemblFungi" id="CAY71159">
    <property type="protein sequence ID" value="CAY71159"/>
    <property type="gene ID" value="PAS_chr3_1092"/>
</dbReference>
<dbReference type="GeneID" id="8200051"/>
<dbReference type="KEGG" id="ppa:PAS_chr3_1092"/>
<dbReference type="eggNOG" id="KOG0295">
    <property type="taxonomic scope" value="Eukaryota"/>
</dbReference>
<dbReference type="HOGENOM" id="CLU_000288_57_15_1"/>
<dbReference type="InParanoid" id="C4R6H3"/>
<dbReference type="OMA" id="TTHCIKV"/>
<dbReference type="OrthoDB" id="10264588at2759"/>
<dbReference type="Proteomes" id="UP000000314">
    <property type="component" value="Chromosome 3"/>
</dbReference>
<dbReference type="GO" id="GO:0005737">
    <property type="term" value="C:cytoplasm"/>
    <property type="evidence" value="ECO:0007669"/>
    <property type="project" value="UniProtKB-UniRule"/>
</dbReference>
<dbReference type="GO" id="GO:0005874">
    <property type="term" value="C:microtubule"/>
    <property type="evidence" value="ECO:0007669"/>
    <property type="project" value="UniProtKB-KW"/>
</dbReference>
<dbReference type="GO" id="GO:0005875">
    <property type="term" value="C:microtubule associated complex"/>
    <property type="evidence" value="ECO:0007669"/>
    <property type="project" value="UniProtKB-UniRule"/>
</dbReference>
<dbReference type="GO" id="GO:0000922">
    <property type="term" value="C:spindle pole"/>
    <property type="evidence" value="ECO:0007669"/>
    <property type="project" value="UniProtKB-SubCell"/>
</dbReference>
<dbReference type="GO" id="GO:0046540">
    <property type="term" value="C:U4/U6 x U5 tri-snRNP complex"/>
    <property type="evidence" value="ECO:0007669"/>
    <property type="project" value="TreeGrafter"/>
</dbReference>
<dbReference type="GO" id="GO:0070840">
    <property type="term" value="F:dynein complex binding"/>
    <property type="evidence" value="ECO:0007669"/>
    <property type="project" value="UniProtKB-UniRule"/>
</dbReference>
<dbReference type="GO" id="GO:0030621">
    <property type="term" value="F:U4 snRNA binding"/>
    <property type="evidence" value="ECO:0007669"/>
    <property type="project" value="TreeGrafter"/>
</dbReference>
<dbReference type="GO" id="GO:0017070">
    <property type="term" value="F:U6 snRNA binding"/>
    <property type="evidence" value="ECO:0007669"/>
    <property type="project" value="TreeGrafter"/>
</dbReference>
<dbReference type="GO" id="GO:0051301">
    <property type="term" value="P:cell division"/>
    <property type="evidence" value="ECO:0007669"/>
    <property type="project" value="UniProtKB-KW"/>
</dbReference>
<dbReference type="GO" id="GO:0000132">
    <property type="term" value="P:establishment of mitotic spindle orientation"/>
    <property type="evidence" value="ECO:0007669"/>
    <property type="project" value="UniProtKB-UniRule"/>
</dbReference>
<dbReference type="GO" id="GO:0051012">
    <property type="term" value="P:microtubule sliding"/>
    <property type="evidence" value="ECO:0007669"/>
    <property type="project" value="UniProtKB-UniRule"/>
</dbReference>
<dbReference type="GO" id="GO:0000398">
    <property type="term" value="P:mRNA splicing, via spliceosome"/>
    <property type="evidence" value="ECO:0007669"/>
    <property type="project" value="TreeGrafter"/>
</dbReference>
<dbReference type="CDD" id="cd00200">
    <property type="entry name" value="WD40"/>
    <property type="match status" value="1"/>
</dbReference>
<dbReference type="Gene3D" id="1.20.960.30">
    <property type="match status" value="1"/>
</dbReference>
<dbReference type="Gene3D" id="2.130.10.10">
    <property type="entry name" value="YVTN repeat-like/Quinoprotein amine dehydrogenase"/>
    <property type="match status" value="2"/>
</dbReference>
<dbReference type="HAMAP" id="MF_03141">
    <property type="entry name" value="lis1"/>
    <property type="match status" value="1"/>
</dbReference>
<dbReference type="InterPro" id="IPR017252">
    <property type="entry name" value="Dynein_regulator_LIS1"/>
</dbReference>
<dbReference type="InterPro" id="IPR020472">
    <property type="entry name" value="G-protein_beta_WD-40_rep"/>
</dbReference>
<dbReference type="InterPro" id="IPR037190">
    <property type="entry name" value="LIS1_N"/>
</dbReference>
<dbReference type="InterPro" id="IPR015943">
    <property type="entry name" value="WD40/YVTN_repeat-like_dom_sf"/>
</dbReference>
<dbReference type="InterPro" id="IPR019775">
    <property type="entry name" value="WD40_repeat_CS"/>
</dbReference>
<dbReference type="InterPro" id="IPR036322">
    <property type="entry name" value="WD40_repeat_dom_sf"/>
</dbReference>
<dbReference type="InterPro" id="IPR001680">
    <property type="entry name" value="WD40_rpt"/>
</dbReference>
<dbReference type="PANTHER" id="PTHR19846:SF0">
    <property type="entry name" value="PRE-MRNA PROCESSING FACTOR 4"/>
    <property type="match status" value="1"/>
</dbReference>
<dbReference type="PANTHER" id="PTHR19846">
    <property type="entry name" value="WD40 REPEAT PROTEIN"/>
    <property type="match status" value="1"/>
</dbReference>
<dbReference type="Pfam" id="PF00400">
    <property type="entry name" value="WD40"/>
    <property type="match status" value="5"/>
</dbReference>
<dbReference type="PRINTS" id="PR00320">
    <property type="entry name" value="GPROTEINBRPT"/>
</dbReference>
<dbReference type="SMART" id="SM00320">
    <property type="entry name" value="WD40"/>
    <property type="match status" value="7"/>
</dbReference>
<dbReference type="SUPFAM" id="SSF109925">
    <property type="entry name" value="Lissencephaly-1 protein (Lis-1, PAF-AH alpha) N-terminal domain"/>
    <property type="match status" value="1"/>
</dbReference>
<dbReference type="SUPFAM" id="SSF50978">
    <property type="entry name" value="WD40 repeat-like"/>
    <property type="match status" value="1"/>
</dbReference>
<dbReference type="PROSITE" id="PS00678">
    <property type="entry name" value="WD_REPEATS_1"/>
    <property type="match status" value="4"/>
</dbReference>
<dbReference type="PROSITE" id="PS50082">
    <property type="entry name" value="WD_REPEATS_2"/>
    <property type="match status" value="5"/>
</dbReference>
<dbReference type="PROSITE" id="PS50294">
    <property type="entry name" value="WD_REPEATS_REGION"/>
    <property type="match status" value="1"/>
</dbReference>
<protein>
    <recommendedName>
        <fullName evidence="1">Nuclear distribution protein PAC1</fullName>
    </recommendedName>
    <alternativeName>
        <fullName evidence="1">Lissencephaly-1 homolog</fullName>
        <shortName evidence="1">LIS-1</shortName>
    </alternativeName>
    <alternativeName>
        <fullName evidence="1">nudF homolog</fullName>
    </alternativeName>
</protein>
<organism>
    <name type="scientific">Komagataella phaffii (strain GS115 / ATCC 20864)</name>
    <name type="common">Yeast</name>
    <name type="synonym">Pichia pastoris</name>
    <dbReference type="NCBI Taxonomy" id="644223"/>
    <lineage>
        <taxon>Eukaryota</taxon>
        <taxon>Fungi</taxon>
        <taxon>Dikarya</taxon>
        <taxon>Ascomycota</taxon>
        <taxon>Saccharomycotina</taxon>
        <taxon>Pichiomycetes</taxon>
        <taxon>Pichiales</taxon>
        <taxon>Pichiaceae</taxon>
        <taxon>Komagataella</taxon>
    </lineage>
</organism>
<comment type="function">
    <text evidence="1">Positively regulates the activity of the minus-end directed microtubule motor protein dynein. Plays a central role in positioning the mitotic spindle at the bud neck during cell division. Targets cytoplasmic dynein to microtubule plus ends, thereby promoting dynein-mediated microtubule sliding along the bud cortex and consequently the movement of the mitotic spindle to the bud neck.</text>
</comment>
<comment type="subunit">
    <text evidence="1">Self-associates. Interacts with NDL1 and dynein.</text>
</comment>
<comment type="subcellular location">
    <subcellularLocation>
        <location evidence="1">Cytoplasm</location>
        <location evidence="1">Cytoskeleton</location>
    </subcellularLocation>
    <subcellularLocation>
        <location evidence="1">Cytoplasm</location>
        <location evidence="1">Cytoskeleton</location>
        <location evidence="1">Spindle pole</location>
    </subcellularLocation>
    <text evidence="1">Localizes to the plus ends of microtubules and the mitotic spindle poles.</text>
</comment>
<comment type="similarity">
    <text evidence="1">Belongs to the WD repeat LIS1/nudF family.</text>
</comment>
<feature type="chain" id="PRO_0000405094" description="Nuclear distribution protein PAC1">
    <location>
        <begin position="1"/>
        <end position="500"/>
    </location>
</feature>
<feature type="repeat" description="WD 1">
    <location>
        <begin position="125"/>
        <end position="164"/>
    </location>
</feature>
<feature type="repeat" description="WD 2">
    <location>
        <begin position="169"/>
        <end position="219"/>
    </location>
</feature>
<feature type="repeat" description="WD 3">
    <location>
        <begin position="225"/>
        <end position="265"/>
    </location>
</feature>
<feature type="repeat" description="WD 4">
    <location>
        <begin position="268"/>
        <end position="310"/>
    </location>
</feature>
<feature type="repeat" description="WD 5">
    <location>
        <begin position="338"/>
        <end position="378"/>
    </location>
</feature>
<feature type="repeat" description="WD 6">
    <location>
        <begin position="397"/>
        <end position="436"/>
    </location>
</feature>
<feature type="repeat" description="WD 7">
    <location>
        <begin position="459"/>
        <end position="500"/>
    </location>
</feature>
<reference key="1">
    <citation type="journal article" date="2009" name="Nat. Biotechnol.">
        <title>Genome sequence of the recombinant protein production host Pichia pastoris.</title>
        <authorList>
            <person name="De Schutter K."/>
            <person name="Lin Y.-C."/>
            <person name="Tiels P."/>
            <person name="Van Hecke A."/>
            <person name="Glinka S."/>
            <person name="Weber-Lehmann J."/>
            <person name="Rouze P."/>
            <person name="Van de Peer Y."/>
            <person name="Callewaert N."/>
        </authorList>
    </citation>
    <scope>NUCLEOTIDE SEQUENCE [LARGE SCALE GENOMIC DNA]</scope>
    <source>
        <strain>GS115 / ATCC 20864</strain>
    </source>
</reference>
<keyword id="KW-0131">Cell cycle</keyword>
<keyword id="KW-0132">Cell division</keyword>
<keyword id="KW-0175">Coiled coil</keyword>
<keyword id="KW-0963">Cytoplasm</keyword>
<keyword id="KW-0206">Cytoskeleton</keyword>
<keyword id="KW-0493">Microtubule</keyword>
<keyword id="KW-0498">Mitosis</keyword>
<keyword id="KW-1185">Reference proteome</keyword>
<keyword id="KW-0677">Repeat</keyword>
<keyword id="KW-0813">Transport</keyword>
<keyword id="KW-0853">WD repeat</keyword>
<evidence type="ECO:0000255" key="1">
    <source>
        <dbReference type="HAMAP-Rule" id="MF_03141"/>
    </source>
</evidence>
<accession>C4R6H3</accession>